<sequence>MGVFNYEAETPSVIPAARLFKSYVLDGDKLIPKVAPQVISSVENVGGNGGPGTIKNITFAEGIPFKFVKERVDEVDNANFKYNYTVIEGDVLGDKLEKVSHELKIVAAPGGGSIVKISSKFHAKGYHEVNAEKMKGAKEMAEKLLRAVESYLLAHTAEYN</sequence>
<protein>
    <recommendedName>
        <fullName>Major pollen allergen Car b 1 isoforms 1A and 1B</fullName>
    </recommendedName>
    <alternativeName>
        <fullName>Allergen Car b I</fullName>
    </alternativeName>
    <allergenName>Car b 1</allergenName>
</protein>
<name>MPAC1_CARBE</name>
<evidence type="ECO:0000250" key="1"/>
<evidence type="ECO:0000305" key="2"/>
<feature type="initiator methionine" description="Removed" evidence="1">
    <location>
        <position position="1"/>
    </location>
</feature>
<feature type="chain" id="PRO_0000154185" description="Major pollen allergen Car b 1 isoforms 1A and 1B">
    <location>
        <begin position="2"/>
        <end position="160"/>
    </location>
</feature>
<feature type="sequence variant" description="In isoform 1B.">
    <original>V</original>
    <variation>A</variation>
    <location>
        <position position="38"/>
    </location>
</feature>
<feature type="sequence variant" description="In isoform 1B.">
    <original>I</original>
    <variation>S</variation>
    <location>
        <position position="63"/>
    </location>
</feature>
<feature type="sequence variant" description="In isoform 1B.">
    <original>K</original>
    <variation>E</variation>
    <location>
        <position position="133"/>
    </location>
</feature>
<dbReference type="EMBL" id="X66932">
    <property type="protein sequence ID" value="CAA47366.1"/>
    <property type="molecule type" value="mRNA"/>
</dbReference>
<dbReference type="EMBL" id="X66918">
    <property type="protein sequence ID" value="CAA47357.1"/>
    <property type="molecule type" value="mRNA"/>
</dbReference>
<dbReference type="SMR" id="P38949"/>
<dbReference type="Allergome" id="180">
    <property type="allergen name" value="Car b 1"/>
</dbReference>
<dbReference type="Allergome" id="181">
    <property type="allergen name" value="Car b 1.0101"/>
</dbReference>
<dbReference type="Allergome" id="182">
    <property type="allergen name" value="Car b 1.0102"/>
</dbReference>
<dbReference type="GO" id="GO:0005737">
    <property type="term" value="C:cytoplasm"/>
    <property type="evidence" value="ECO:0007669"/>
    <property type="project" value="TreeGrafter"/>
</dbReference>
<dbReference type="GO" id="GO:0005634">
    <property type="term" value="C:nucleus"/>
    <property type="evidence" value="ECO:0007669"/>
    <property type="project" value="TreeGrafter"/>
</dbReference>
<dbReference type="GO" id="GO:0010427">
    <property type="term" value="F:abscisic acid binding"/>
    <property type="evidence" value="ECO:0007669"/>
    <property type="project" value="InterPro"/>
</dbReference>
<dbReference type="GO" id="GO:0004864">
    <property type="term" value="F:protein phosphatase inhibitor activity"/>
    <property type="evidence" value="ECO:0007669"/>
    <property type="project" value="InterPro"/>
</dbReference>
<dbReference type="GO" id="GO:0038023">
    <property type="term" value="F:signaling receptor activity"/>
    <property type="evidence" value="ECO:0007669"/>
    <property type="project" value="InterPro"/>
</dbReference>
<dbReference type="GO" id="GO:0009738">
    <property type="term" value="P:abscisic acid-activated signaling pathway"/>
    <property type="evidence" value="ECO:0007669"/>
    <property type="project" value="InterPro"/>
</dbReference>
<dbReference type="GO" id="GO:0006952">
    <property type="term" value="P:defense response"/>
    <property type="evidence" value="ECO:0007669"/>
    <property type="project" value="UniProtKB-KW"/>
</dbReference>
<dbReference type="CDD" id="cd07816">
    <property type="entry name" value="Bet_v1-like"/>
    <property type="match status" value="1"/>
</dbReference>
<dbReference type="FunFam" id="3.30.530.20:FF:000007">
    <property type="entry name" value="Major pollen allergen Bet v 1-A"/>
    <property type="match status" value="1"/>
</dbReference>
<dbReference type="Gene3D" id="3.30.530.20">
    <property type="match status" value="1"/>
</dbReference>
<dbReference type="InterPro" id="IPR000916">
    <property type="entry name" value="Bet_v_I/MLP"/>
</dbReference>
<dbReference type="InterPro" id="IPR024949">
    <property type="entry name" value="Bet_v_I_allergen"/>
</dbReference>
<dbReference type="InterPro" id="IPR050279">
    <property type="entry name" value="Plant_def-hormone_signal"/>
</dbReference>
<dbReference type="InterPro" id="IPR023393">
    <property type="entry name" value="START-like_dom_sf"/>
</dbReference>
<dbReference type="PANTHER" id="PTHR31213">
    <property type="entry name" value="OS08G0374000 PROTEIN-RELATED"/>
    <property type="match status" value="1"/>
</dbReference>
<dbReference type="PANTHER" id="PTHR31213:SF55">
    <property type="entry name" value="STRESS-INDUCED PROTEIN SAM22"/>
    <property type="match status" value="1"/>
</dbReference>
<dbReference type="Pfam" id="PF00407">
    <property type="entry name" value="Bet_v_1"/>
    <property type="match status" value="1"/>
</dbReference>
<dbReference type="PRINTS" id="PR00634">
    <property type="entry name" value="BETALLERGEN"/>
</dbReference>
<dbReference type="SMART" id="SM01037">
    <property type="entry name" value="Bet_v_1"/>
    <property type="match status" value="1"/>
</dbReference>
<dbReference type="SUPFAM" id="SSF55961">
    <property type="entry name" value="Bet v1-like"/>
    <property type="match status" value="1"/>
</dbReference>
<dbReference type="PROSITE" id="PS00451">
    <property type="entry name" value="PATHOGENESIS_BETVI"/>
    <property type="match status" value="1"/>
</dbReference>
<comment type="allergen">
    <text>Causes an allergic reaction in human.</text>
</comment>
<comment type="miscellaneous">
    <text>The sequence shown is that of isoform 1A.</text>
</comment>
<comment type="similarity">
    <text evidence="2">Belongs to the BetVI family.</text>
</comment>
<organism>
    <name type="scientific">Carpinus betulus</name>
    <name type="common">European hornbeam</name>
    <name type="synonym">Carpinus caucasica</name>
    <dbReference type="NCBI Taxonomy" id="12990"/>
    <lineage>
        <taxon>Eukaryota</taxon>
        <taxon>Viridiplantae</taxon>
        <taxon>Streptophyta</taxon>
        <taxon>Embryophyta</taxon>
        <taxon>Tracheophyta</taxon>
        <taxon>Spermatophyta</taxon>
        <taxon>Magnoliopsida</taxon>
        <taxon>eudicotyledons</taxon>
        <taxon>Gunneridae</taxon>
        <taxon>Pentapetalae</taxon>
        <taxon>rosids</taxon>
        <taxon>fabids</taxon>
        <taxon>Fagales</taxon>
        <taxon>Betulaceae</taxon>
        <taxon>Carpinus</taxon>
    </lineage>
</organism>
<proteinExistence type="evidence at protein level"/>
<keyword id="KW-0020">Allergen</keyword>
<keyword id="KW-0568">Pathogenesis-related protein</keyword>
<keyword id="KW-0611">Plant defense</keyword>
<reference key="1">
    <citation type="journal article" date="1992" name="Mol. Immunol.">
        <title>PCR based cloning and sequencing of isogenes encoding the tree pollen major allergen Car b I from Carpinus betulus, hornbeam.</title>
        <authorList>
            <person name="Nedergaard Larsen J."/>
            <person name="Stroeman P."/>
            <person name="Ipsen H."/>
        </authorList>
    </citation>
    <scope>NUCLEOTIDE SEQUENCE [MRNA]</scope>
    <source>
        <tissue>Pollen</tissue>
    </source>
</reference>
<accession>P38949</accession>